<sequence length="966" mass="107741">MKLLTAKEVRNAYLDFFKEQKHIYVHSSSTIPLDDPTLLFANAGMNQFKPIFLGTADPNSEMSKWVRVANTQKCIRAGGKHNDLDDVGKDVYHHTFFEMLGNWSFGDYFKKEICSWAWEFLTQRLALPKDRLYVTYFGGDAASGLEPDLECKQMWLDLGLKPEHILPGSMKDNFWEMGETGPCGPCSELHFDRIGGRSVPELVNMDDPDVLEIWNLVFIQYNRESDGSLKQLPKKHIDCGMGFERLVSVIQNKRSNYDTDLFVPLFDAIQAGTGAPPYQGRVGADDVDGIDMAYRVLADHARTITIALADGGTPDNTGRGYVLRRILRRAVRYATEKLNAKPGFFATLVNTVVDLLGDAFPEVKKDPQHIIDIINEEELQFLKTLTRGRNLLNRTIEKLGNQTTIPGDVAWRLYDTYGFPVDLTQLMAEEKSLKIDMDGYEAAKHNSYVLSQGKGASKIEEINLDVHAISQLQEQGVPPTNDTFKYKYEAVSDERDSAYNYGVCNSKIVALRFENQFVNEITSGQKAGIVLDKTNFYAESGGQIYDQGALVKVNDEANEFLVDRVYNRGGYILHIGVVEGTLKVGDELELHIDVERRWLTMKNHSATHALNHCLLQVLGKDTEQKGSLVVPEKLRFDFNSKAAMTIEQVSKTEQLTKEMVYKNVPIYAKESKLALAKKIRGLRSVFDEVYPDPVRVISFGVPVDELEQNPDSEAGEQTSVEFCGGTHLRRSGHIMDFVISSEEAIAKGIRRIVALTGPEALKALKKSEAFEQEIVRLKATIDNDKSGKDSKSHVKEIVELTEQISHATIPYVKKDEMRNLLKGLKKTLDDKERALRAAVSVTVVERAKTLCEANPNATVLVEQLEAFNNTKALDAALKQVRSQLPDAAAMFLSVDADSKKIFCLSSVPKSAVEKGLKANEWVQHVSATLGGKGGGKPESAQASGTNYEKVDEIVQLASKFAQSKLS</sequence>
<proteinExistence type="evidence at transcript level"/>
<reference key="1">
    <citation type="journal article" date="2000" name="Proc. Natl. Acad. Sci. U.S.A.">
        <title>Origin of mitochondria in relation to evolutionary history of eukaryotic alanyl-tRNA synthetase.</title>
        <authorList>
            <person name="Chihade J.W."/>
            <person name="Brown J.R."/>
            <person name="Schimmel P.R."/>
            <person name="Ribas De Pouplana L."/>
        </authorList>
    </citation>
    <scope>NUCLEOTIDE SEQUENCE [MRNA]</scope>
</reference>
<reference key="2">
    <citation type="journal article" date="2000" name="Science">
        <title>The genome sequence of Drosophila melanogaster.</title>
        <authorList>
            <person name="Adams M.D."/>
            <person name="Celniker S.E."/>
            <person name="Holt R.A."/>
            <person name="Evans C.A."/>
            <person name="Gocayne J.D."/>
            <person name="Amanatides P.G."/>
            <person name="Scherer S.E."/>
            <person name="Li P.W."/>
            <person name="Hoskins R.A."/>
            <person name="Galle R.F."/>
            <person name="George R.A."/>
            <person name="Lewis S.E."/>
            <person name="Richards S."/>
            <person name="Ashburner M."/>
            <person name="Henderson S.N."/>
            <person name="Sutton G.G."/>
            <person name="Wortman J.R."/>
            <person name="Yandell M.D."/>
            <person name="Zhang Q."/>
            <person name="Chen L.X."/>
            <person name="Brandon R.C."/>
            <person name="Rogers Y.-H.C."/>
            <person name="Blazej R.G."/>
            <person name="Champe M."/>
            <person name="Pfeiffer B.D."/>
            <person name="Wan K.H."/>
            <person name="Doyle C."/>
            <person name="Baxter E.G."/>
            <person name="Helt G."/>
            <person name="Nelson C.R."/>
            <person name="Miklos G.L.G."/>
            <person name="Abril J.F."/>
            <person name="Agbayani A."/>
            <person name="An H.-J."/>
            <person name="Andrews-Pfannkoch C."/>
            <person name="Baldwin D."/>
            <person name="Ballew R.M."/>
            <person name="Basu A."/>
            <person name="Baxendale J."/>
            <person name="Bayraktaroglu L."/>
            <person name="Beasley E.M."/>
            <person name="Beeson K.Y."/>
            <person name="Benos P.V."/>
            <person name="Berman B.P."/>
            <person name="Bhandari D."/>
            <person name="Bolshakov S."/>
            <person name="Borkova D."/>
            <person name="Botchan M.R."/>
            <person name="Bouck J."/>
            <person name="Brokstein P."/>
            <person name="Brottier P."/>
            <person name="Burtis K.C."/>
            <person name="Busam D.A."/>
            <person name="Butler H."/>
            <person name="Cadieu E."/>
            <person name="Center A."/>
            <person name="Chandra I."/>
            <person name="Cherry J.M."/>
            <person name="Cawley S."/>
            <person name="Dahlke C."/>
            <person name="Davenport L.B."/>
            <person name="Davies P."/>
            <person name="de Pablos B."/>
            <person name="Delcher A."/>
            <person name="Deng Z."/>
            <person name="Mays A.D."/>
            <person name="Dew I."/>
            <person name="Dietz S.M."/>
            <person name="Dodson K."/>
            <person name="Doup L.E."/>
            <person name="Downes M."/>
            <person name="Dugan-Rocha S."/>
            <person name="Dunkov B.C."/>
            <person name="Dunn P."/>
            <person name="Durbin K.J."/>
            <person name="Evangelista C.C."/>
            <person name="Ferraz C."/>
            <person name="Ferriera S."/>
            <person name="Fleischmann W."/>
            <person name="Fosler C."/>
            <person name="Gabrielian A.E."/>
            <person name="Garg N.S."/>
            <person name="Gelbart W.M."/>
            <person name="Glasser K."/>
            <person name="Glodek A."/>
            <person name="Gong F."/>
            <person name="Gorrell J.H."/>
            <person name="Gu Z."/>
            <person name="Guan P."/>
            <person name="Harris M."/>
            <person name="Harris N.L."/>
            <person name="Harvey D.A."/>
            <person name="Heiman T.J."/>
            <person name="Hernandez J.R."/>
            <person name="Houck J."/>
            <person name="Hostin D."/>
            <person name="Houston K.A."/>
            <person name="Howland T.J."/>
            <person name="Wei M.-H."/>
            <person name="Ibegwam C."/>
            <person name="Jalali M."/>
            <person name="Kalush F."/>
            <person name="Karpen G.H."/>
            <person name="Ke Z."/>
            <person name="Kennison J.A."/>
            <person name="Ketchum K.A."/>
            <person name="Kimmel B.E."/>
            <person name="Kodira C.D."/>
            <person name="Kraft C.L."/>
            <person name="Kravitz S."/>
            <person name="Kulp D."/>
            <person name="Lai Z."/>
            <person name="Lasko P."/>
            <person name="Lei Y."/>
            <person name="Levitsky A.A."/>
            <person name="Li J.H."/>
            <person name="Li Z."/>
            <person name="Liang Y."/>
            <person name="Lin X."/>
            <person name="Liu X."/>
            <person name="Mattei B."/>
            <person name="McIntosh T.C."/>
            <person name="McLeod M.P."/>
            <person name="McPherson D."/>
            <person name="Merkulov G."/>
            <person name="Milshina N.V."/>
            <person name="Mobarry C."/>
            <person name="Morris J."/>
            <person name="Moshrefi A."/>
            <person name="Mount S.M."/>
            <person name="Moy M."/>
            <person name="Murphy B."/>
            <person name="Murphy L."/>
            <person name="Muzny D.M."/>
            <person name="Nelson D.L."/>
            <person name="Nelson D.R."/>
            <person name="Nelson K.A."/>
            <person name="Nixon K."/>
            <person name="Nusskern D.R."/>
            <person name="Pacleb J.M."/>
            <person name="Palazzolo M."/>
            <person name="Pittman G.S."/>
            <person name="Pan S."/>
            <person name="Pollard J."/>
            <person name="Puri V."/>
            <person name="Reese M.G."/>
            <person name="Reinert K."/>
            <person name="Remington K."/>
            <person name="Saunders R.D.C."/>
            <person name="Scheeler F."/>
            <person name="Shen H."/>
            <person name="Shue B.C."/>
            <person name="Siden-Kiamos I."/>
            <person name="Simpson M."/>
            <person name="Skupski M.P."/>
            <person name="Smith T.J."/>
            <person name="Spier E."/>
            <person name="Spradling A.C."/>
            <person name="Stapleton M."/>
            <person name="Strong R."/>
            <person name="Sun E."/>
            <person name="Svirskas R."/>
            <person name="Tector C."/>
            <person name="Turner R."/>
            <person name="Venter E."/>
            <person name="Wang A.H."/>
            <person name="Wang X."/>
            <person name="Wang Z.-Y."/>
            <person name="Wassarman D.A."/>
            <person name="Weinstock G.M."/>
            <person name="Weissenbach J."/>
            <person name="Williams S.M."/>
            <person name="Woodage T."/>
            <person name="Worley K.C."/>
            <person name="Wu D."/>
            <person name="Yang S."/>
            <person name="Yao Q.A."/>
            <person name="Ye J."/>
            <person name="Yeh R.-F."/>
            <person name="Zaveri J.S."/>
            <person name="Zhan M."/>
            <person name="Zhang G."/>
            <person name="Zhao Q."/>
            <person name="Zheng L."/>
            <person name="Zheng X.H."/>
            <person name="Zhong F.N."/>
            <person name="Zhong W."/>
            <person name="Zhou X."/>
            <person name="Zhu S.C."/>
            <person name="Zhu X."/>
            <person name="Smith H.O."/>
            <person name="Gibbs R.A."/>
            <person name="Myers E.W."/>
            <person name="Rubin G.M."/>
            <person name="Venter J.C."/>
        </authorList>
    </citation>
    <scope>NUCLEOTIDE SEQUENCE [LARGE SCALE GENOMIC DNA]</scope>
    <source>
        <strain>Berkeley</strain>
    </source>
</reference>
<reference key="3">
    <citation type="journal article" date="2002" name="Genome Biol.">
        <title>Annotation of the Drosophila melanogaster euchromatic genome: a systematic review.</title>
        <authorList>
            <person name="Misra S."/>
            <person name="Crosby M.A."/>
            <person name="Mungall C.J."/>
            <person name="Matthews B.B."/>
            <person name="Campbell K.S."/>
            <person name="Hradecky P."/>
            <person name="Huang Y."/>
            <person name="Kaminker J.S."/>
            <person name="Millburn G.H."/>
            <person name="Prochnik S.E."/>
            <person name="Smith C.D."/>
            <person name="Tupy J.L."/>
            <person name="Whitfield E.J."/>
            <person name="Bayraktaroglu L."/>
            <person name="Berman B.P."/>
            <person name="Bettencourt B.R."/>
            <person name="Celniker S.E."/>
            <person name="de Grey A.D.N.J."/>
            <person name="Drysdale R.A."/>
            <person name="Harris N.L."/>
            <person name="Richter J."/>
            <person name="Russo S."/>
            <person name="Schroeder A.J."/>
            <person name="Shu S.Q."/>
            <person name="Stapleton M."/>
            <person name="Yamada C."/>
            <person name="Ashburner M."/>
            <person name="Gelbart W.M."/>
            <person name="Rubin G.M."/>
            <person name="Lewis S.E."/>
        </authorList>
    </citation>
    <scope>GENOME REANNOTATION</scope>
    <source>
        <strain>Berkeley</strain>
    </source>
</reference>
<reference key="4">
    <citation type="journal article" date="2002" name="Genome Biol.">
        <title>A Drosophila full-length cDNA resource.</title>
        <authorList>
            <person name="Stapleton M."/>
            <person name="Carlson J.W."/>
            <person name="Brokstein P."/>
            <person name="Yu C."/>
            <person name="Champe M."/>
            <person name="George R.A."/>
            <person name="Guarin H."/>
            <person name="Kronmiller B."/>
            <person name="Pacleb J.M."/>
            <person name="Park S."/>
            <person name="Wan K.H."/>
            <person name="Rubin G.M."/>
            <person name="Celniker S.E."/>
        </authorList>
    </citation>
    <scope>NUCLEOTIDE SEQUENCE [LARGE SCALE MRNA]</scope>
    <source>
        <strain>Berkeley</strain>
    </source>
</reference>
<evidence type="ECO:0000255" key="1">
    <source>
        <dbReference type="HAMAP-Rule" id="MF_03133"/>
    </source>
</evidence>
<evidence type="ECO:0000303" key="2">
    <source>
    </source>
</evidence>
<evidence type="ECO:0000305" key="3"/>
<evidence type="ECO:0000312" key="4">
    <source>
        <dbReference type="FlyBase" id="FBgn0027094"/>
    </source>
</evidence>
<comment type="function">
    <text evidence="1">Catalyzes the attachment of alanine to tRNA(Ala) in a two-step reaction: alanine is first activated by ATP to form Ala-AMP and then transferred to the acceptor end of tRNA(Ala). Also edits incorrectly charged tRNA(Ala) via its editing domain.</text>
</comment>
<comment type="catalytic activity">
    <reaction evidence="1">
        <text>tRNA(Ala) + L-alanine + ATP = L-alanyl-tRNA(Ala) + AMP + diphosphate</text>
        <dbReference type="Rhea" id="RHEA:12540"/>
        <dbReference type="Rhea" id="RHEA-COMP:9657"/>
        <dbReference type="Rhea" id="RHEA-COMP:9923"/>
        <dbReference type="ChEBI" id="CHEBI:30616"/>
        <dbReference type="ChEBI" id="CHEBI:33019"/>
        <dbReference type="ChEBI" id="CHEBI:57972"/>
        <dbReference type="ChEBI" id="CHEBI:78442"/>
        <dbReference type="ChEBI" id="CHEBI:78497"/>
        <dbReference type="ChEBI" id="CHEBI:456215"/>
        <dbReference type="EC" id="6.1.1.7"/>
    </reaction>
</comment>
<comment type="cofactor">
    <cofactor evidence="1">
        <name>Zn(2+)</name>
        <dbReference type="ChEBI" id="CHEBI:29105"/>
    </cofactor>
    <text evidence="1">Binds 1 zinc ion per subunit.</text>
</comment>
<comment type="subunit">
    <text evidence="1">Monomer.</text>
</comment>
<comment type="subcellular location">
    <subcellularLocation>
        <location evidence="1">Cytoplasm</location>
    </subcellularLocation>
</comment>
<comment type="domain">
    <text evidence="1">Consists of three domains; the N-terminal catalytic domain, the editing domain and the C-terminal C-Ala domain. The editing domain removes incorrectly charged amino acids, while the C-Ala domain, along with tRNA(Ala), serves as a bridge to cooperatively bring together the editing and aminoacylation centers thus stimulating deacylation of misacylated tRNAs.</text>
</comment>
<comment type="similarity">
    <text evidence="1">Belongs to the class-II aminoacyl-tRNA synthetase family.</text>
</comment>
<comment type="sequence caution" evidence="3">
    <conflict type="frameshift">
        <sequence resource="EMBL-CDS" id="AAF05593"/>
    </conflict>
</comment>
<feature type="chain" id="PRO_0000402114" description="Alanine--tRNA ligase, cytoplasmic">
    <location>
        <begin position="1"/>
        <end position="966"/>
    </location>
</feature>
<feature type="binding site" evidence="1">
    <location>
        <position position="604"/>
    </location>
    <ligand>
        <name>Zn(2+)</name>
        <dbReference type="ChEBI" id="CHEBI:29105"/>
    </ligand>
</feature>
<feature type="binding site" evidence="1">
    <location>
        <position position="608"/>
    </location>
    <ligand>
        <name>Zn(2+)</name>
        <dbReference type="ChEBI" id="CHEBI:29105"/>
    </ligand>
</feature>
<feature type="binding site" evidence="1">
    <location>
        <position position="723"/>
    </location>
    <ligand>
        <name>Zn(2+)</name>
        <dbReference type="ChEBI" id="CHEBI:29105"/>
    </ligand>
</feature>
<feature type="binding site" evidence="1">
    <location>
        <position position="727"/>
    </location>
    <ligand>
        <name>Zn(2+)</name>
        <dbReference type="ChEBI" id="CHEBI:29105"/>
    </ligand>
</feature>
<feature type="sequence conflict" description="In Ref. 4; AAL39400." evidence="3" ref="4">
    <original>E</original>
    <variation>D</variation>
    <location>
        <position position="489"/>
    </location>
</feature>
<feature type="sequence conflict" description="In Ref. 4; AAL39400." evidence="3" ref="4">
    <original>T</original>
    <variation>A</variation>
    <location>
        <position position="849"/>
    </location>
</feature>
<keyword id="KW-0030">Aminoacyl-tRNA synthetase</keyword>
<keyword id="KW-0067">ATP-binding</keyword>
<keyword id="KW-0963">Cytoplasm</keyword>
<keyword id="KW-0436">Ligase</keyword>
<keyword id="KW-0479">Metal-binding</keyword>
<keyword id="KW-0547">Nucleotide-binding</keyword>
<keyword id="KW-0648">Protein biosynthesis</keyword>
<keyword id="KW-1185">Reference proteome</keyword>
<keyword id="KW-0694">RNA-binding</keyword>
<keyword id="KW-0820">tRNA-binding</keyword>
<keyword id="KW-0862">Zinc</keyword>
<dbReference type="EC" id="6.1.1.7" evidence="1"/>
<dbReference type="EMBL" id="AF188718">
    <property type="protein sequence ID" value="AAF05593.1"/>
    <property type="status" value="ALT_FRAME"/>
    <property type="molecule type" value="mRNA"/>
</dbReference>
<dbReference type="EMBL" id="AE014134">
    <property type="protein sequence ID" value="AAF52657.1"/>
    <property type="molecule type" value="Genomic_DNA"/>
</dbReference>
<dbReference type="EMBL" id="AE014134">
    <property type="protein sequence ID" value="AAS64737.1"/>
    <property type="molecule type" value="Genomic_DNA"/>
</dbReference>
<dbReference type="EMBL" id="AY069255">
    <property type="protein sequence ID" value="AAL39400.1"/>
    <property type="molecule type" value="mRNA"/>
</dbReference>
<dbReference type="RefSeq" id="NP_523511.2">
    <property type="nucleotide sequence ID" value="NM_078787.4"/>
</dbReference>
<dbReference type="RefSeq" id="NP_995656.1">
    <property type="nucleotide sequence ID" value="NM_205934.3"/>
</dbReference>
<dbReference type="SMR" id="Q9VLM8"/>
<dbReference type="BioGRID" id="60280">
    <property type="interactions" value="3"/>
</dbReference>
<dbReference type="FunCoup" id="Q9VLM8">
    <property type="interactions" value="2038"/>
</dbReference>
<dbReference type="IntAct" id="Q9VLM8">
    <property type="interactions" value="74"/>
</dbReference>
<dbReference type="STRING" id="7227.FBpp0089366"/>
<dbReference type="PaxDb" id="7227-FBpp0079326"/>
<dbReference type="EnsemblMetazoa" id="FBtr0079721">
    <property type="protein sequence ID" value="FBpp0079326"/>
    <property type="gene ID" value="FBgn0027094"/>
</dbReference>
<dbReference type="EnsemblMetazoa" id="FBtr0079722">
    <property type="protein sequence ID" value="FBpp0089366"/>
    <property type="gene ID" value="FBgn0027094"/>
</dbReference>
<dbReference type="GeneID" id="34156"/>
<dbReference type="KEGG" id="dme:Dmel_CG13391"/>
<dbReference type="UCSC" id="CG13391-RA">
    <property type="organism name" value="d. melanogaster"/>
</dbReference>
<dbReference type="AGR" id="FB:FBgn0027094"/>
<dbReference type="CTD" id="34156"/>
<dbReference type="FlyBase" id="FBgn0027094">
    <property type="gene designation" value="AlaRS"/>
</dbReference>
<dbReference type="VEuPathDB" id="VectorBase:FBgn0027094"/>
<dbReference type="eggNOG" id="KOG0188">
    <property type="taxonomic scope" value="Eukaryota"/>
</dbReference>
<dbReference type="HOGENOM" id="CLU_004485_5_0_1"/>
<dbReference type="InParanoid" id="Q9VLM8"/>
<dbReference type="OMA" id="NKKDNFW"/>
<dbReference type="OrthoDB" id="2423964at2759"/>
<dbReference type="PhylomeDB" id="Q9VLM8"/>
<dbReference type="BioGRID-ORCS" id="34156">
    <property type="hits" value="2 hits in 3 CRISPR screens"/>
</dbReference>
<dbReference type="GenomeRNAi" id="34156"/>
<dbReference type="PRO" id="PR:Q9VLM8"/>
<dbReference type="Proteomes" id="UP000000803">
    <property type="component" value="Chromosome 2L"/>
</dbReference>
<dbReference type="Bgee" id="FBgn0027094">
    <property type="expression patterns" value="Expressed in eye disc (Drosophila) and 128 other cell types or tissues"/>
</dbReference>
<dbReference type="ExpressionAtlas" id="Q9VLM8">
    <property type="expression patterns" value="baseline and differential"/>
</dbReference>
<dbReference type="GO" id="GO:0005737">
    <property type="term" value="C:cytoplasm"/>
    <property type="evidence" value="ECO:0000250"/>
    <property type="project" value="FlyBase"/>
</dbReference>
<dbReference type="GO" id="GO:0005739">
    <property type="term" value="C:mitochondrion"/>
    <property type="evidence" value="ECO:0000318"/>
    <property type="project" value="GO_Central"/>
</dbReference>
<dbReference type="GO" id="GO:0004813">
    <property type="term" value="F:alanine-tRNA ligase activity"/>
    <property type="evidence" value="ECO:0000250"/>
    <property type="project" value="FlyBase"/>
</dbReference>
<dbReference type="GO" id="GO:0002161">
    <property type="term" value="F:aminoacyl-tRNA deacylase activity"/>
    <property type="evidence" value="ECO:0000318"/>
    <property type="project" value="GO_Central"/>
</dbReference>
<dbReference type="GO" id="GO:0005524">
    <property type="term" value="F:ATP binding"/>
    <property type="evidence" value="ECO:0007669"/>
    <property type="project" value="UniProtKB-UniRule"/>
</dbReference>
<dbReference type="GO" id="GO:0000049">
    <property type="term" value="F:tRNA binding"/>
    <property type="evidence" value="ECO:0007669"/>
    <property type="project" value="UniProtKB-KW"/>
</dbReference>
<dbReference type="GO" id="GO:0008270">
    <property type="term" value="F:zinc ion binding"/>
    <property type="evidence" value="ECO:0007669"/>
    <property type="project" value="UniProtKB-UniRule"/>
</dbReference>
<dbReference type="GO" id="GO:0006419">
    <property type="term" value="P:alanyl-tRNA aminoacylation"/>
    <property type="evidence" value="ECO:0000250"/>
    <property type="project" value="FlyBase"/>
</dbReference>
<dbReference type="CDD" id="cd00673">
    <property type="entry name" value="AlaRS_core"/>
    <property type="match status" value="1"/>
</dbReference>
<dbReference type="FunFam" id="3.30.930.10:FF:000011">
    <property type="entry name" value="Alanine--tRNA ligase, cytoplasmic"/>
    <property type="match status" value="1"/>
</dbReference>
<dbReference type="FunFam" id="3.30.980.10:FF:000004">
    <property type="entry name" value="Alanine--tRNA ligase, cytoplasmic"/>
    <property type="match status" value="1"/>
</dbReference>
<dbReference type="FunFam" id="3.10.310.40:FF:000002">
    <property type="entry name" value="alanine--tRNA ligase, cytoplasmic"/>
    <property type="match status" value="1"/>
</dbReference>
<dbReference type="FunFam" id="2.40.30.130:FF:000009">
    <property type="entry name" value="Alanine--tRNA ligase, mitochondrial"/>
    <property type="match status" value="1"/>
</dbReference>
<dbReference type="Gene3D" id="2.40.30.130">
    <property type="match status" value="1"/>
</dbReference>
<dbReference type="Gene3D" id="3.10.310.40">
    <property type="match status" value="1"/>
</dbReference>
<dbReference type="Gene3D" id="3.30.930.10">
    <property type="entry name" value="Bira Bifunctional Protein, Domain 2"/>
    <property type="match status" value="1"/>
</dbReference>
<dbReference type="Gene3D" id="3.30.980.10">
    <property type="entry name" value="Threonyl-trna Synthetase, Chain A, domain 2"/>
    <property type="match status" value="1"/>
</dbReference>
<dbReference type="HAMAP" id="MF_00036_B">
    <property type="entry name" value="Ala_tRNA_synth_B"/>
    <property type="match status" value="1"/>
</dbReference>
<dbReference type="InterPro" id="IPR045864">
    <property type="entry name" value="aa-tRNA-synth_II/BPL/LPL"/>
</dbReference>
<dbReference type="InterPro" id="IPR002318">
    <property type="entry name" value="Ala-tRNA-lgiase_IIc"/>
</dbReference>
<dbReference type="InterPro" id="IPR018162">
    <property type="entry name" value="Ala-tRNA-ligase_IIc_anticod-bd"/>
</dbReference>
<dbReference type="InterPro" id="IPR018165">
    <property type="entry name" value="Ala-tRNA-synth_IIc_core"/>
</dbReference>
<dbReference type="InterPro" id="IPR018164">
    <property type="entry name" value="Ala-tRNA-synth_IIc_N"/>
</dbReference>
<dbReference type="InterPro" id="IPR050058">
    <property type="entry name" value="Ala-tRNA_ligase"/>
</dbReference>
<dbReference type="InterPro" id="IPR023033">
    <property type="entry name" value="Ala_tRNA_ligase_euk/bac"/>
</dbReference>
<dbReference type="InterPro" id="IPR003156">
    <property type="entry name" value="DHHA1_dom"/>
</dbReference>
<dbReference type="InterPro" id="IPR018163">
    <property type="entry name" value="Thr/Ala-tRNA-synth_IIc_edit"/>
</dbReference>
<dbReference type="InterPro" id="IPR009000">
    <property type="entry name" value="Transl_B-barrel_sf"/>
</dbReference>
<dbReference type="InterPro" id="IPR012947">
    <property type="entry name" value="tRNA_SAD"/>
</dbReference>
<dbReference type="NCBIfam" id="TIGR00344">
    <property type="entry name" value="alaS"/>
    <property type="match status" value="1"/>
</dbReference>
<dbReference type="PANTHER" id="PTHR11777:SF9">
    <property type="entry name" value="ALANINE--TRNA LIGASE, CYTOPLASMIC"/>
    <property type="match status" value="1"/>
</dbReference>
<dbReference type="PANTHER" id="PTHR11777">
    <property type="entry name" value="ALANYL-TRNA SYNTHETASE"/>
    <property type="match status" value="1"/>
</dbReference>
<dbReference type="Pfam" id="PF02272">
    <property type="entry name" value="DHHA1"/>
    <property type="match status" value="1"/>
</dbReference>
<dbReference type="Pfam" id="PF01411">
    <property type="entry name" value="tRNA-synt_2c"/>
    <property type="match status" value="1"/>
</dbReference>
<dbReference type="Pfam" id="PF07973">
    <property type="entry name" value="tRNA_SAD"/>
    <property type="match status" value="1"/>
</dbReference>
<dbReference type="PRINTS" id="PR00980">
    <property type="entry name" value="TRNASYNTHALA"/>
</dbReference>
<dbReference type="SMART" id="SM00863">
    <property type="entry name" value="tRNA_SAD"/>
    <property type="match status" value="1"/>
</dbReference>
<dbReference type="SUPFAM" id="SSF55681">
    <property type="entry name" value="Class II aaRS and biotin synthetases"/>
    <property type="match status" value="1"/>
</dbReference>
<dbReference type="SUPFAM" id="SSF101353">
    <property type="entry name" value="Putative anticodon-binding domain of alanyl-tRNA synthetase (AlaRS)"/>
    <property type="match status" value="1"/>
</dbReference>
<dbReference type="SUPFAM" id="SSF55186">
    <property type="entry name" value="ThrRS/AlaRS common domain"/>
    <property type="match status" value="1"/>
</dbReference>
<dbReference type="SUPFAM" id="SSF50447">
    <property type="entry name" value="Translation proteins"/>
    <property type="match status" value="1"/>
</dbReference>
<dbReference type="PROSITE" id="PS50860">
    <property type="entry name" value="AA_TRNA_LIGASE_II_ALA"/>
    <property type="match status" value="1"/>
</dbReference>
<accession>Q9VLM8</accession>
<accession>Q8T9K4</accession>
<accession>Q9U6B4</accession>
<name>SYAC_DROME</name>
<organism>
    <name type="scientific">Drosophila melanogaster</name>
    <name type="common">Fruit fly</name>
    <dbReference type="NCBI Taxonomy" id="7227"/>
    <lineage>
        <taxon>Eukaryota</taxon>
        <taxon>Metazoa</taxon>
        <taxon>Ecdysozoa</taxon>
        <taxon>Arthropoda</taxon>
        <taxon>Hexapoda</taxon>
        <taxon>Insecta</taxon>
        <taxon>Pterygota</taxon>
        <taxon>Neoptera</taxon>
        <taxon>Endopterygota</taxon>
        <taxon>Diptera</taxon>
        <taxon>Brachycera</taxon>
        <taxon>Muscomorpha</taxon>
        <taxon>Ephydroidea</taxon>
        <taxon>Drosophilidae</taxon>
        <taxon>Drosophila</taxon>
        <taxon>Sophophora</taxon>
    </lineage>
</organism>
<gene>
    <name evidence="4" type="primary">AlaRS</name>
    <name evidence="1 4" type="synonym">Aats-ala</name>
    <name evidence="2" type="synonym">alaS</name>
    <name evidence="4" type="ORF">CG13391</name>
</gene>
<protein>
    <recommendedName>
        <fullName evidence="1">Alanine--tRNA ligase, cytoplasmic</fullName>
        <ecNumber evidence="1">6.1.1.7</ecNumber>
    </recommendedName>
    <alternativeName>
        <fullName evidence="1 4">Alanyl-tRNA synthetase</fullName>
        <shortName evidence="1">AlaRS</shortName>
    </alternativeName>
</protein>